<organism>
    <name type="scientific">Arabidopsis thaliana</name>
    <name type="common">Mouse-ear cress</name>
    <dbReference type="NCBI Taxonomy" id="3702"/>
    <lineage>
        <taxon>Eukaryota</taxon>
        <taxon>Viridiplantae</taxon>
        <taxon>Streptophyta</taxon>
        <taxon>Embryophyta</taxon>
        <taxon>Tracheophyta</taxon>
        <taxon>Spermatophyta</taxon>
        <taxon>Magnoliopsida</taxon>
        <taxon>eudicotyledons</taxon>
        <taxon>Gunneridae</taxon>
        <taxon>Pentapetalae</taxon>
        <taxon>rosids</taxon>
        <taxon>malvids</taxon>
        <taxon>Brassicales</taxon>
        <taxon>Brassicaceae</taxon>
        <taxon>Camelineae</taxon>
        <taxon>Arabidopsis</taxon>
    </lineage>
</organism>
<dbReference type="EC" id="1.3.1.74"/>
<dbReference type="EMBL" id="Z49268">
    <property type="protein sequence ID" value="CAA89262.1"/>
    <property type="molecule type" value="mRNA"/>
</dbReference>
<dbReference type="EMBL" id="AL391141">
    <property type="protein sequence ID" value="CAC01712.1"/>
    <property type="molecule type" value="Genomic_DNA"/>
</dbReference>
<dbReference type="EMBL" id="CP002688">
    <property type="protein sequence ID" value="AED92367.1"/>
    <property type="molecule type" value="Genomic_DNA"/>
</dbReference>
<dbReference type="EMBL" id="AY091320">
    <property type="protein sequence ID" value="AAM14259.1"/>
    <property type="molecule type" value="mRNA"/>
</dbReference>
<dbReference type="EMBL" id="AY065253">
    <property type="protein sequence ID" value="AAL38729.1"/>
    <property type="molecule type" value="mRNA"/>
</dbReference>
<dbReference type="PIR" id="S57612">
    <property type="entry name" value="S57612"/>
</dbReference>
<dbReference type="PIR" id="T51554">
    <property type="entry name" value="T51554"/>
</dbReference>
<dbReference type="RefSeq" id="NP_197201.1">
    <property type="nucleotide sequence ID" value="NM_121705.4"/>
</dbReference>
<dbReference type="SMR" id="Q39173"/>
<dbReference type="BioGRID" id="16838">
    <property type="interactions" value="2"/>
</dbReference>
<dbReference type="FunCoup" id="Q39173">
    <property type="interactions" value="1728"/>
</dbReference>
<dbReference type="IntAct" id="Q39173">
    <property type="interactions" value="1"/>
</dbReference>
<dbReference type="STRING" id="3702.Q39173"/>
<dbReference type="PaxDb" id="3702-AT5G16990.1"/>
<dbReference type="ProteomicsDB" id="248809"/>
<dbReference type="DNASU" id="831562"/>
<dbReference type="EnsemblPlants" id="AT5G16990.1">
    <property type="protein sequence ID" value="AT5G16990.1"/>
    <property type="gene ID" value="AT5G16990"/>
</dbReference>
<dbReference type="GeneID" id="831562"/>
<dbReference type="Gramene" id="AT5G16990.1">
    <property type="protein sequence ID" value="AT5G16990.1"/>
    <property type="gene ID" value="AT5G16990"/>
</dbReference>
<dbReference type="KEGG" id="ath:AT5G16990"/>
<dbReference type="Araport" id="AT5G16990"/>
<dbReference type="TAIR" id="AT5G16990"/>
<dbReference type="eggNOG" id="KOG1196">
    <property type="taxonomic scope" value="Eukaryota"/>
</dbReference>
<dbReference type="HOGENOM" id="CLU_026673_29_1_1"/>
<dbReference type="InParanoid" id="Q39173"/>
<dbReference type="OMA" id="DKVMGMT"/>
<dbReference type="OrthoDB" id="809632at2759"/>
<dbReference type="PhylomeDB" id="Q39173"/>
<dbReference type="BioCyc" id="ARA:AT5G16990-MONOMER"/>
<dbReference type="CD-CODE" id="4299E36E">
    <property type="entry name" value="Nucleolus"/>
</dbReference>
<dbReference type="PRO" id="PR:Q39173"/>
<dbReference type="Proteomes" id="UP000006548">
    <property type="component" value="Chromosome 5"/>
</dbReference>
<dbReference type="ExpressionAtlas" id="Q39173">
    <property type="expression patterns" value="baseline and differential"/>
</dbReference>
<dbReference type="GO" id="GO:0005886">
    <property type="term" value="C:plasma membrane"/>
    <property type="evidence" value="ECO:0007005"/>
    <property type="project" value="TAIR"/>
</dbReference>
<dbReference type="GO" id="GO:0009536">
    <property type="term" value="C:plastid"/>
    <property type="evidence" value="ECO:0007005"/>
    <property type="project" value="TAIR"/>
</dbReference>
<dbReference type="GO" id="GO:0035798">
    <property type="term" value="F:2-alkenal reductase (NADPH) activity"/>
    <property type="evidence" value="ECO:0007669"/>
    <property type="project" value="RHEA"/>
</dbReference>
<dbReference type="GO" id="GO:0006979">
    <property type="term" value="P:response to oxidative stress"/>
    <property type="evidence" value="ECO:0000270"/>
    <property type="project" value="TAIR"/>
</dbReference>
<dbReference type="CDD" id="cd08295">
    <property type="entry name" value="double_bond_reductase_like"/>
    <property type="match status" value="1"/>
</dbReference>
<dbReference type="FunFam" id="3.90.180.10:FF:000049">
    <property type="entry name" value="NADPH-dependent oxidoreductase 2-alkenal reductase"/>
    <property type="match status" value="1"/>
</dbReference>
<dbReference type="FunFam" id="3.40.50.720:FF:000121">
    <property type="entry name" value="Prostaglandin reductase 2"/>
    <property type="match status" value="1"/>
</dbReference>
<dbReference type="Gene3D" id="3.90.180.10">
    <property type="entry name" value="Medium-chain alcohol dehydrogenases, catalytic domain"/>
    <property type="match status" value="1"/>
</dbReference>
<dbReference type="Gene3D" id="3.40.50.720">
    <property type="entry name" value="NAD(P)-binding Rossmann-like Domain"/>
    <property type="match status" value="1"/>
</dbReference>
<dbReference type="InterPro" id="IPR013149">
    <property type="entry name" value="ADH-like_C"/>
</dbReference>
<dbReference type="InterPro" id="IPR041694">
    <property type="entry name" value="ADH_N_2"/>
</dbReference>
<dbReference type="InterPro" id="IPR011032">
    <property type="entry name" value="GroES-like_sf"/>
</dbReference>
<dbReference type="InterPro" id="IPR045010">
    <property type="entry name" value="MDR_fam"/>
</dbReference>
<dbReference type="InterPro" id="IPR036291">
    <property type="entry name" value="NAD(P)-bd_dom_sf"/>
</dbReference>
<dbReference type="InterPro" id="IPR020843">
    <property type="entry name" value="PKS_ER"/>
</dbReference>
<dbReference type="PANTHER" id="PTHR43205:SF30">
    <property type="entry name" value="NADP-DEPENDENT ALKENAL DOUBLE BOND REDUCTASE P2-RELATED"/>
    <property type="match status" value="1"/>
</dbReference>
<dbReference type="PANTHER" id="PTHR43205">
    <property type="entry name" value="PROSTAGLANDIN REDUCTASE"/>
    <property type="match status" value="1"/>
</dbReference>
<dbReference type="Pfam" id="PF16884">
    <property type="entry name" value="ADH_N_2"/>
    <property type="match status" value="1"/>
</dbReference>
<dbReference type="Pfam" id="PF00107">
    <property type="entry name" value="ADH_zinc_N"/>
    <property type="match status" value="1"/>
</dbReference>
<dbReference type="SMART" id="SM00829">
    <property type="entry name" value="PKS_ER"/>
    <property type="match status" value="1"/>
</dbReference>
<dbReference type="SUPFAM" id="SSF50129">
    <property type="entry name" value="GroES-like"/>
    <property type="match status" value="2"/>
</dbReference>
<dbReference type="SUPFAM" id="SSF51735">
    <property type="entry name" value="NAD(P)-binding Rossmann-fold domains"/>
    <property type="match status" value="1"/>
</dbReference>
<evidence type="ECO:0000250" key="1"/>
<evidence type="ECO:0000305" key="2"/>
<accession>Q39173</accession>
<accession>Q9LFK3</accession>
<comment type="function">
    <text evidence="1">Catalyzes the reduction of the 7-8 double bond of phenylpropanal substrates, such as p-coumaryl aldehyde and coniferyl aldehyde (in vitro). Has activity towards toxic substrates, such as 4-hydroxy-(2E)-nonenal (in vitro) (By similarity). May play a distinct role in plant antioxidant defense and is possibly involved in NAD(P)/NAD(P)h homeostasis.</text>
</comment>
<comment type="catalytic activity">
    <reaction>
        <text>an n-alkanal + NAD(+) = an alk-2-enal + NADH + H(+)</text>
        <dbReference type="Rhea" id="RHEA:13733"/>
        <dbReference type="ChEBI" id="CHEBI:12834"/>
        <dbReference type="ChEBI" id="CHEBI:13757"/>
        <dbReference type="ChEBI" id="CHEBI:15378"/>
        <dbReference type="ChEBI" id="CHEBI:57540"/>
        <dbReference type="ChEBI" id="CHEBI:57945"/>
        <dbReference type="EC" id="1.3.1.74"/>
    </reaction>
</comment>
<comment type="catalytic activity">
    <reaction>
        <text>an n-alkanal + NADP(+) = an alk-2-enal + NADPH + H(+)</text>
        <dbReference type="Rhea" id="RHEA:13737"/>
        <dbReference type="ChEBI" id="CHEBI:12834"/>
        <dbReference type="ChEBI" id="CHEBI:13757"/>
        <dbReference type="ChEBI" id="CHEBI:15378"/>
        <dbReference type="ChEBI" id="CHEBI:57783"/>
        <dbReference type="ChEBI" id="CHEBI:58349"/>
        <dbReference type="EC" id="1.3.1.74"/>
    </reaction>
</comment>
<comment type="subunit">
    <text evidence="1">Homodimer.</text>
</comment>
<comment type="similarity">
    <text evidence="2">Belongs to the NADP-dependent oxidoreductase L4BD family.</text>
</comment>
<name>P2_ARATH</name>
<proteinExistence type="evidence at transcript level"/>
<protein>
    <recommendedName>
        <fullName>NADP-dependent alkenal double bond reductase P2</fullName>
        <ecNumber>1.3.1.74</ecNumber>
    </recommendedName>
</protein>
<keyword id="KW-0521">NADP</keyword>
<keyword id="KW-0560">Oxidoreductase</keyword>
<keyword id="KW-1185">Reference proteome</keyword>
<sequence length="343" mass="37989">MTTNKQVIFKDHVSGFPKESDFNFTTTTVELRVPEGSKSVLVKNLYLSCDPYMRSRMGKPDPSSALAQAYAPGKPIYGYGVSRVIESGHPDYKKGDLLWGIVGWEEYSVITPMAHMHFKIQHTDVPLSYYTGLLGMPGMTAYAGFYEVCSPKKGETVYVSAASGAVGQLVGQFAKMMGCYVVGSAGSKEKVDLLKTKFGFDDAFNYKEESDLSAALKRCFPKGIDMYFENVGGKMLDAVLLNMNPHGRIAVCGMISQYNLENQEGVHNLSNIIYKRIRIQGFVVADFYDKYPKFLELVLPRIKEGKITYVEDVADGLEKAPEALVGLFHGKNVGKQVVVIARE</sequence>
<gene>
    <name type="primary">P2</name>
    <name type="ordered locus">At5g16990</name>
    <name type="ORF">F2K13_140</name>
</gene>
<feature type="chain" id="PRO_0000218074" description="NADP-dependent alkenal double bond reductase P2">
    <location>
        <begin position="1"/>
        <end position="343"/>
    </location>
</feature>
<feature type="binding site" evidence="1">
    <location>
        <position position="52"/>
    </location>
    <ligand>
        <name>substrate</name>
    </ligand>
</feature>
<feature type="binding site" evidence="1">
    <location>
        <position position="79"/>
    </location>
    <ligand>
        <name>substrate</name>
    </ligand>
</feature>
<feature type="binding site" evidence="1">
    <location>
        <begin position="164"/>
        <end position="167"/>
    </location>
    <ligand>
        <name>NADP(+)</name>
        <dbReference type="ChEBI" id="CHEBI:58349"/>
    </ligand>
</feature>
<feature type="binding site" evidence="1">
    <location>
        <position position="190"/>
    </location>
    <ligand>
        <name>NADP(+)</name>
        <dbReference type="ChEBI" id="CHEBI:58349"/>
    </ligand>
</feature>
<feature type="binding site" evidence="1">
    <location>
        <position position="206"/>
    </location>
    <ligand>
        <name>NADP(+)</name>
        <dbReference type="ChEBI" id="CHEBI:58349"/>
    </ligand>
</feature>
<feature type="binding site" evidence="1">
    <location>
        <position position="230"/>
    </location>
    <ligand>
        <name>NADP(+)</name>
        <dbReference type="ChEBI" id="CHEBI:58349"/>
    </ligand>
</feature>
<feature type="binding site" evidence="1">
    <location>
        <begin position="252"/>
        <end position="258"/>
    </location>
    <ligand>
        <name>NADP(+)</name>
        <dbReference type="ChEBI" id="CHEBI:58349"/>
    </ligand>
</feature>
<feature type="binding site" evidence="1">
    <location>
        <begin position="282"/>
        <end position="284"/>
    </location>
    <ligand>
        <name>NADP(+)</name>
        <dbReference type="ChEBI" id="CHEBI:58349"/>
    </ligand>
</feature>
<feature type="binding site" evidence="1">
    <location>
        <position position="332"/>
    </location>
    <ligand>
        <name>NADP(+)</name>
        <dbReference type="ChEBI" id="CHEBI:58349"/>
    </ligand>
</feature>
<feature type="sequence conflict" description="In Ref. 1; CAA89262." evidence="2" ref="1">
    <location>
        <position position="15"/>
    </location>
</feature>
<reference key="1">
    <citation type="journal article" date="1995" name="J. Biol. Chem.">
        <title>Arabidopsis thaliana NADPH oxidoreductase homologs confer tolerance of yeasts toward the thiol-oxidizing drug diamide.</title>
        <authorList>
            <person name="Babiychuk E."/>
            <person name="Kushnir S."/>
            <person name="Belles-Boix E."/>
            <person name="van Montagu M."/>
            <person name="Inze D."/>
        </authorList>
    </citation>
    <scope>NUCLEOTIDE SEQUENCE [MRNA]</scope>
    <source>
        <strain>cv. Columbia</strain>
    </source>
</reference>
<reference key="2">
    <citation type="journal article" date="2000" name="Nature">
        <title>Sequence and analysis of chromosome 5 of the plant Arabidopsis thaliana.</title>
        <authorList>
            <person name="Tabata S."/>
            <person name="Kaneko T."/>
            <person name="Nakamura Y."/>
            <person name="Kotani H."/>
            <person name="Kato T."/>
            <person name="Asamizu E."/>
            <person name="Miyajima N."/>
            <person name="Sasamoto S."/>
            <person name="Kimura T."/>
            <person name="Hosouchi T."/>
            <person name="Kawashima K."/>
            <person name="Kohara M."/>
            <person name="Matsumoto M."/>
            <person name="Matsuno A."/>
            <person name="Muraki A."/>
            <person name="Nakayama S."/>
            <person name="Nakazaki N."/>
            <person name="Naruo K."/>
            <person name="Okumura S."/>
            <person name="Shinpo S."/>
            <person name="Takeuchi C."/>
            <person name="Wada T."/>
            <person name="Watanabe A."/>
            <person name="Yamada M."/>
            <person name="Yasuda M."/>
            <person name="Sato S."/>
            <person name="de la Bastide M."/>
            <person name="Huang E."/>
            <person name="Spiegel L."/>
            <person name="Gnoj L."/>
            <person name="O'Shaughnessy A."/>
            <person name="Preston R."/>
            <person name="Habermann K."/>
            <person name="Murray J."/>
            <person name="Johnson D."/>
            <person name="Rohlfing T."/>
            <person name="Nelson J."/>
            <person name="Stoneking T."/>
            <person name="Pepin K."/>
            <person name="Spieth J."/>
            <person name="Sekhon M."/>
            <person name="Armstrong J."/>
            <person name="Becker M."/>
            <person name="Belter E."/>
            <person name="Cordum H."/>
            <person name="Cordes M."/>
            <person name="Courtney L."/>
            <person name="Courtney W."/>
            <person name="Dante M."/>
            <person name="Du H."/>
            <person name="Edwards J."/>
            <person name="Fryman J."/>
            <person name="Haakensen B."/>
            <person name="Lamar E."/>
            <person name="Latreille P."/>
            <person name="Leonard S."/>
            <person name="Meyer R."/>
            <person name="Mulvaney E."/>
            <person name="Ozersky P."/>
            <person name="Riley A."/>
            <person name="Strowmatt C."/>
            <person name="Wagner-McPherson C."/>
            <person name="Wollam A."/>
            <person name="Yoakum M."/>
            <person name="Bell M."/>
            <person name="Dedhia N."/>
            <person name="Parnell L."/>
            <person name="Shah R."/>
            <person name="Rodriguez M."/>
            <person name="Hoon See L."/>
            <person name="Vil D."/>
            <person name="Baker J."/>
            <person name="Kirchoff K."/>
            <person name="Toth K."/>
            <person name="King L."/>
            <person name="Bahret A."/>
            <person name="Miller B."/>
            <person name="Marra M.A."/>
            <person name="Martienssen R."/>
            <person name="McCombie W.R."/>
            <person name="Wilson R.K."/>
            <person name="Murphy G."/>
            <person name="Bancroft I."/>
            <person name="Volckaert G."/>
            <person name="Wambutt R."/>
            <person name="Duesterhoeft A."/>
            <person name="Stiekema W."/>
            <person name="Pohl T."/>
            <person name="Entian K.-D."/>
            <person name="Terryn N."/>
            <person name="Hartley N."/>
            <person name="Bent E."/>
            <person name="Johnson S."/>
            <person name="Langham S.-A."/>
            <person name="McCullagh B."/>
            <person name="Robben J."/>
            <person name="Grymonprez B."/>
            <person name="Zimmermann W."/>
            <person name="Ramsperger U."/>
            <person name="Wedler H."/>
            <person name="Balke K."/>
            <person name="Wedler E."/>
            <person name="Peters S."/>
            <person name="van Staveren M."/>
            <person name="Dirkse W."/>
            <person name="Mooijman P."/>
            <person name="Klein Lankhorst R."/>
            <person name="Weitzenegger T."/>
            <person name="Bothe G."/>
            <person name="Rose M."/>
            <person name="Hauf J."/>
            <person name="Berneiser S."/>
            <person name="Hempel S."/>
            <person name="Feldpausch M."/>
            <person name="Lamberth S."/>
            <person name="Villarroel R."/>
            <person name="Gielen J."/>
            <person name="Ardiles W."/>
            <person name="Bents O."/>
            <person name="Lemcke K."/>
            <person name="Kolesov G."/>
            <person name="Mayer K.F.X."/>
            <person name="Rudd S."/>
            <person name="Schoof H."/>
            <person name="Schueller C."/>
            <person name="Zaccaria P."/>
            <person name="Mewes H.-W."/>
            <person name="Bevan M."/>
            <person name="Fransz P.F."/>
        </authorList>
    </citation>
    <scope>NUCLEOTIDE SEQUENCE [LARGE SCALE GENOMIC DNA]</scope>
    <source>
        <strain>cv. Columbia</strain>
    </source>
</reference>
<reference key="3">
    <citation type="journal article" date="2017" name="Plant J.">
        <title>Araport11: a complete reannotation of the Arabidopsis thaliana reference genome.</title>
        <authorList>
            <person name="Cheng C.Y."/>
            <person name="Krishnakumar V."/>
            <person name="Chan A.P."/>
            <person name="Thibaud-Nissen F."/>
            <person name="Schobel S."/>
            <person name="Town C.D."/>
        </authorList>
    </citation>
    <scope>GENOME REANNOTATION</scope>
    <source>
        <strain>cv. Columbia</strain>
    </source>
</reference>
<reference key="4">
    <citation type="journal article" date="2003" name="Science">
        <title>Empirical analysis of transcriptional activity in the Arabidopsis genome.</title>
        <authorList>
            <person name="Yamada K."/>
            <person name="Lim J."/>
            <person name="Dale J.M."/>
            <person name="Chen H."/>
            <person name="Shinn P."/>
            <person name="Palm C.J."/>
            <person name="Southwick A.M."/>
            <person name="Wu H.C."/>
            <person name="Kim C.J."/>
            <person name="Nguyen M."/>
            <person name="Pham P.K."/>
            <person name="Cheuk R.F."/>
            <person name="Karlin-Newmann G."/>
            <person name="Liu S.X."/>
            <person name="Lam B."/>
            <person name="Sakano H."/>
            <person name="Wu T."/>
            <person name="Yu G."/>
            <person name="Miranda M."/>
            <person name="Quach H.L."/>
            <person name="Tripp M."/>
            <person name="Chang C.H."/>
            <person name="Lee J.M."/>
            <person name="Toriumi M.J."/>
            <person name="Chan M.M."/>
            <person name="Tang C.C."/>
            <person name="Onodera C.S."/>
            <person name="Deng J.M."/>
            <person name="Akiyama K."/>
            <person name="Ansari Y."/>
            <person name="Arakawa T."/>
            <person name="Banh J."/>
            <person name="Banno F."/>
            <person name="Bowser L."/>
            <person name="Brooks S.Y."/>
            <person name="Carninci P."/>
            <person name="Chao Q."/>
            <person name="Choy N."/>
            <person name="Enju A."/>
            <person name="Goldsmith A.D."/>
            <person name="Gurjal M."/>
            <person name="Hansen N.F."/>
            <person name="Hayashizaki Y."/>
            <person name="Johnson-Hopson C."/>
            <person name="Hsuan V.W."/>
            <person name="Iida K."/>
            <person name="Karnes M."/>
            <person name="Khan S."/>
            <person name="Koesema E."/>
            <person name="Ishida J."/>
            <person name="Jiang P.X."/>
            <person name="Jones T."/>
            <person name="Kawai J."/>
            <person name="Kamiya A."/>
            <person name="Meyers C."/>
            <person name="Nakajima M."/>
            <person name="Narusaka M."/>
            <person name="Seki M."/>
            <person name="Sakurai T."/>
            <person name="Satou M."/>
            <person name="Tamse R."/>
            <person name="Vaysberg M."/>
            <person name="Wallender E.K."/>
            <person name="Wong C."/>
            <person name="Yamamura Y."/>
            <person name="Yuan S."/>
            <person name="Shinozaki K."/>
            <person name="Davis R.W."/>
            <person name="Theologis A."/>
            <person name="Ecker J.R."/>
        </authorList>
    </citation>
    <scope>NUCLEOTIDE SEQUENCE [LARGE SCALE MRNA]</scope>
    <source>
        <strain>cv. Columbia</strain>
    </source>
</reference>